<proteinExistence type="inferred from homology"/>
<sequence>MKRTFQPSKIRRKRTHGFRARMATKNGRKVLAARRRKGRKALIP</sequence>
<gene>
    <name evidence="1" type="primary">rpmH</name>
    <name type="ordered locus">Mmc1_3760</name>
</gene>
<accession>A0LE52</accession>
<comment type="similarity">
    <text evidence="1">Belongs to the bacterial ribosomal protein bL34 family.</text>
</comment>
<evidence type="ECO:0000255" key="1">
    <source>
        <dbReference type="HAMAP-Rule" id="MF_00391"/>
    </source>
</evidence>
<evidence type="ECO:0000305" key="2"/>
<name>RL34_MAGMM</name>
<protein>
    <recommendedName>
        <fullName evidence="1">Large ribosomal subunit protein bL34</fullName>
    </recommendedName>
    <alternativeName>
        <fullName evidence="2">50S ribosomal protein L34</fullName>
    </alternativeName>
</protein>
<organism>
    <name type="scientific">Magnetococcus marinus (strain ATCC BAA-1437 / JCM 17883 / MC-1)</name>
    <dbReference type="NCBI Taxonomy" id="156889"/>
    <lineage>
        <taxon>Bacteria</taxon>
        <taxon>Pseudomonadati</taxon>
        <taxon>Pseudomonadota</taxon>
        <taxon>Alphaproteobacteria</taxon>
        <taxon>Magnetococcales</taxon>
        <taxon>Magnetococcaceae</taxon>
        <taxon>Magnetococcus</taxon>
    </lineage>
</organism>
<reference key="1">
    <citation type="journal article" date="2009" name="Appl. Environ. Microbiol.">
        <title>Complete genome sequence of the chemolithoautotrophic marine magnetotactic coccus strain MC-1.</title>
        <authorList>
            <person name="Schubbe S."/>
            <person name="Williams T.J."/>
            <person name="Xie G."/>
            <person name="Kiss H.E."/>
            <person name="Brettin T.S."/>
            <person name="Martinez D."/>
            <person name="Ross C.A."/>
            <person name="Schuler D."/>
            <person name="Cox B.L."/>
            <person name="Nealson K.H."/>
            <person name="Bazylinski D.A."/>
        </authorList>
    </citation>
    <scope>NUCLEOTIDE SEQUENCE [LARGE SCALE GENOMIC DNA]</scope>
    <source>
        <strain>ATCC BAA-1437 / JCM 17883 / MC-1</strain>
    </source>
</reference>
<dbReference type="EMBL" id="CP000471">
    <property type="protein sequence ID" value="ABK46245.1"/>
    <property type="molecule type" value="Genomic_DNA"/>
</dbReference>
<dbReference type="RefSeq" id="WP_011715297.1">
    <property type="nucleotide sequence ID" value="NC_008576.1"/>
</dbReference>
<dbReference type="SMR" id="A0LE52"/>
<dbReference type="STRING" id="156889.Mmc1_3760"/>
<dbReference type="KEGG" id="mgm:Mmc1_3760"/>
<dbReference type="eggNOG" id="COG0230">
    <property type="taxonomic scope" value="Bacteria"/>
</dbReference>
<dbReference type="HOGENOM" id="CLU_129938_2_0_5"/>
<dbReference type="Proteomes" id="UP000002586">
    <property type="component" value="Chromosome"/>
</dbReference>
<dbReference type="GO" id="GO:1990904">
    <property type="term" value="C:ribonucleoprotein complex"/>
    <property type="evidence" value="ECO:0007669"/>
    <property type="project" value="UniProtKB-KW"/>
</dbReference>
<dbReference type="GO" id="GO:0005840">
    <property type="term" value="C:ribosome"/>
    <property type="evidence" value="ECO:0007669"/>
    <property type="project" value="UniProtKB-KW"/>
</dbReference>
<dbReference type="GO" id="GO:0003735">
    <property type="term" value="F:structural constituent of ribosome"/>
    <property type="evidence" value="ECO:0007669"/>
    <property type="project" value="InterPro"/>
</dbReference>
<dbReference type="GO" id="GO:0006412">
    <property type="term" value="P:translation"/>
    <property type="evidence" value="ECO:0007669"/>
    <property type="project" value="UniProtKB-UniRule"/>
</dbReference>
<dbReference type="FunFam" id="1.10.287.3980:FF:000001">
    <property type="entry name" value="Mitochondrial ribosomal protein L34"/>
    <property type="match status" value="1"/>
</dbReference>
<dbReference type="Gene3D" id="1.10.287.3980">
    <property type="match status" value="1"/>
</dbReference>
<dbReference type="HAMAP" id="MF_00391">
    <property type="entry name" value="Ribosomal_bL34"/>
    <property type="match status" value="1"/>
</dbReference>
<dbReference type="InterPro" id="IPR000271">
    <property type="entry name" value="Ribosomal_bL34"/>
</dbReference>
<dbReference type="InterPro" id="IPR020939">
    <property type="entry name" value="Ribosomal_bL34_CS"/>
</dbReference>
<dbReference type="NCBIfam" id="TIGR01030">
    <property type="entry name" value="rpmH_bact"/>
    <property type="match status" value="1"/>
</dbReference>
<dbReference type="PANTHER" id="PTHR14503:SF4">
    <property type="entry name" value="LARGE RIBOSOMAL SUBUNIT PROTEIN BL34M"/>
    <property type="match status" value="1"/>
</dbReference>
<dbReference type="PANTHER" id="PTHR14503">
    <property type="entry name" value="MITOCHONDRIAL RIBOSOMAL PROTEIN 34 FAMILY MEMBER"/>
    <property type="match status" value="1"/>
</dbReference>
<dbReference type="Pfam" id="PF00468">
    <property type="entry name" value="Ribosomal_L34"/>
    <property type="match status" value="1"/>
</dbReference>
<dbReference type="PROSITE" id="PS00784">
    <property type="entry name" value="RIBOSOMAL_L34"/>
    <property type="match status" value="1"/>
</dbReference>
<feature type="chain" id="PRO_1000013369" description="Large ribosomal subunit protein bL34">
    <location>
        <begin position="1"/>
        <end position="44"/>
    </location>
</feature>
<keyword id="KW-1185">Reference proteome</keyword>
<keyword id="KW-0687">Ribonucleoprotein</keyword>
<keyword id="KW-0689">Ribosomal protein</keyword>